<reference key="1">
    <citation type="journal article" date="2003" name="Lancet">
        <title>Genome sequence of Vibrio parahaemolyticus: a pathogenic mechanism distinct from that of V. cholerae.</title>
        <authorList>
            <person name="Makino K."/>
            <person name="Oshima K."/>
            <person name="Kurokawa K."/>
            <person name="Yokoyama K."/>
            <person name="Uda T."/>
            <person name="Tagomori K."/>
            <person name="Iijima Y."/>
            <person name="Najima M."/>
            <person name="Nakano M."/>
            <person name="Yamashita A."/>
            <person name="Kubota Y."/>
            <person name="Kimura S."/>
            <person name="Yasunaga T."/>
            <person name="Honda T."/>
            <person name="Shinagawa H."/>
            <person name="Hattori M."/>
            <person name="Iida T."/>
        </authorList>
    </citation>
    <scope>NUCLEOTIDE SEQUENCE [LARGE SCALE GENOMIC DNA]</scope>
    <source>
        <strain>RIMD 2210633</strain>
    </source>
</reference>
<accession>Q87Q52</accession>
<gene>
    <name evidence="1" type="primary">cdd</name>
    <name type="ordered locus">VP1298</name>
</gene>
<proteinExistence type="inferred from homology"/>
<organism>
    <name type="scientific">Vibrio parahaemolyticus serotype O3:K6 (strain RIMD 2210633)</name>
    <dbReference type="NCBI Taxonomy" id="223926"/>
    <lineage>
        <taxon>Bacteria</taxon>
        <taxon>Pseudomonadati</taxon>
        <taxon>Pseudomonadota</taxon>
        <taxon>Gammaproteobacteria</taxon>
        <taxon>Vibrionales</taxon>
        <taxon>Vibrionaceae</taxon>
        <taxon>Vibrio</taxon>
    </lineage>
</organism>
<feature type="chain" id="PRO_0000171671" description="Cytidine deaminase">
    <location>
        <begin position="1"/>
        <end position="295"/>
    </location>
</feature>
<feature type="domain" description="CMP/dCMP-type deaminase 1" evidence="2">
    <location>
        <begin position="48"/>
        <end position="168"/>
    </location>
</feature>
<feature type="domain" description="CMP/dCMP-type deaminase 2" evidence="2">
    <location>
        <begin position="187"/>
        <end position="295"/>
    </location>
</feature>
<feature type="active site" description="Proton donor" evidence="1">
    <location>
        <position position="104"/>
    </location>
</feature>
<feature type="binding site" evidence="1">
    <location>
        <begin position="89"/>
        <end position="91"/>
    </location>
    <ligand>
        <name>substrate</name>
    </ligand>
</feature>
<feature type="binding site" evidence="1">
    <location>
        <position position="102"/>
    </location>
    <ligand>
        <name>Zn(2+)</name>
        <dbReference type="ChEBI" id="CHEBI:29105"/>
        <note>catalytic</note>
    </ligand>
</feature>
<feature type="binding site" evidence="1">
    <location>
        <position position="129"/>
    </location>
    <ligand>
        <name>Zn(2+)</name>
        <dbReference type="ChEBI" id="CHEBI:29105"/>
        <note>catalytic</note>
    </ligand>
</feature>
<feature type="binding site" evidence="1">
    <location>
        <position position="132"/>
    </location>
    <ligand>
        <name>Zn(2+)</name>
        <dbReference type="ChEBI" id="CHEBI:29105"/>
        <note>catalytic</note>
    </ligand>
</feature>
<name>CDD_VIBPA</name>
<protein>
    <recommendedName>
        <fullName evidence="1">Cytidine deaminase</fullName>
        <ecNumber evidence="1">3.5.4.5</ecNumber>
    </recommendedName>
    <alternativeName>
        <fullName evidence="1">Cytidine aminohydrolase</fullName>
        <shortName evidence="1">CDA</shortName>
    </alternativeName>
</protein>
<keyword id="KW-0378">Hydrolase</keyword>
<keyword id="KW-0479">Metal-binding</keyword>
<keyword id="KW-0862">Zinc</keyword>
<comment type="function">
    <text evidence="1">This enzyme scavenges exogenous and endogenous cytidine and 2'-deoxycytidine for UMP synthesis.</text>
</comment>
<comment type="catalytic activity">
    <reaction evidence="1">
        <text>cytidine + H2O + H(+) = uridine + NH4(+)</text>
        <dbReference type="Rhea" id="RHEA:16069"/>
        <dbReference type="ChEBI" id="CHEBI:15377"/>
        <dbReference type="ChEBI" id="CHEBI:15378"/>
        <dbReference type="ChEBI" id="CHEBI:16704"/>
        <dbReference type="ChEBI" id="CHEBI:17562"/>
        <dbReference type="ChEBI" id="CHEBI:28938"/>
        <dbReference type="EC" id="3.5.4.5"/>
    </reaction>
</comment>
<comment type="catalytic activity">
    <reaction evidence="1">
        <text>2'-deoxycytidine + H2O + H(+) = 2'-deoxyuridine + NH4(+)</text>
        <dbReference type="Rhea" id="RHEA:13433"/>
        <dbReference type="ChEBI" id="CHEBI:15377"/>
        <dbReference type="ChEBI" id="CHEBI:15378"/>
        <dbReference type="ChEBI" id="CHEBI:15698"/>
        <dbReference type="ChEBI" id="CHEBI:16450"/>
        <dbReference type="ChEBI" id="CHEBI:28938"/>
        <dbReference type="EC" id="3.5.4.5"/>
    </reaction>
</comment>
<comment type="cofactor">
    <cofactor evidence="1">
        <name>Zn(2+)</name>
        <dbReference type="ChEBI" id="CHEBI:29105"/>
    </cofactor>
    <text evidence="1">Binds 1 zinc ion.</text>
</comment>
<comment type="subunit">
    <text evidence="1">Homodimer.</text>
</comment>
<comment type="similarity">
    <text evidence="1">Belongs to the cytidine and deoxycytidylate deaminase family.</text>
</comment>
<evidence type="ECO:0000255" key="1">
    <source>
        <dbReference type="HAMAP-Rule" id="MF_01558"/>
    </source>
</evidence>
<evidence type="ECO:0000255" key="2">
    <source>
        <dbReference type="PROSITE-ProRule" id="PRU01083"/>
    </source>
</evidence>
<dbReference type="EC" id="3.5.4.5" evidence="1"/>
<dbReference type="EMBL" id="BA000031">
    <property type="protein sequence ID" value="BAC59561.1"/>
    <property type="molecule type" value="Genomic_DNA"/>
</dbReference>
<dbReference type="RefSeq" id="NP_797677.1">
    <property type="nucleotide sequence ID" value="NC_004603.1"/>
</dbReference>
<dbReference type="RefSeq" id="WP_005454956.1">
    <property type="nucleotide sequence ID" value="NC_004603.1"/>
</dbReference>
<dbReference type="SMR" id="Q87Q52"/>
<dbReference type="GeneID" id="1188803"/>
<dbReference type="KEGG" id="vpa:VP1298"/>
<dbReference type="PATRIC" id="fig|223926.6.peg.1238"/>
<dbReference type="eggNOG" id="COG0295">
    <property type="taxonomic scope" value="Bacteria"/>
</dbReference>
<dbReference type="HOGENOM" id="CLU_052424_0_0_6"/>
<dbReference type="Proteomes" id="UP000002493">
    <property type="component" value="Chromosome 1"/>
</dbReference>
<dbReference type="GO" id="GO:0005829">
    <property type="term" value="C:cytosol"/>
    <property type="evidence" value="ECO:0007669"/>
    <property type="project" value="TreeGrafter"/>
</dbReference>
<dbReference type="GO" id="GO:0004126">
    <property type="term" value="F:cytidine deaminase activity"/>
    <property type="evidence" value="ECO:0007669"/>
    <property type="project" value="UniProtKB-UniRule"/>
</dbReference>
<dbReference type="GO" id="GO:0042802">
    <property type="term" value="F:identical protein binding"/>
    <property type="evidence" value="ECO:0007669"/>
    <property type="project" value="UniProtKB-ARBA"/>
</dbReference>
<dbReference type="GO" id="GO:0008270">
    <property type="term" value="F:zinc ion binding"/>
    <property type="evidence" value="ECO:0007669"/>
    <property type="project" value="UniProtKB-UniRule"/>
</dbReference>
<dbReference type="GO" id="GO:0009972">
    <property type="term" value="P:cytidine deamination"/>
    <property type="evidence" value="ECO:0007669"/>
    <property type="project" value="InterPro"/>
</dbReference>
<dbReference type="CDD" id="cd01283">
    <property type="entry name" value="cytidine_deaminase"/>
    <property type="match status" value="2"/>
</dbReference>
<dbReference type="FunFam" id="3.40.140.10:FF:000007">
    <property type="entry name" value="Cytidine deaminase"/>
    <property type="match status" value="1"/>
</dbReference>
<dbReference type="Gene3D" id="3.40.140.10">
    <property type="entry name" value="Cytidine Deaminase, domain 2"/>
    <property type="match status" value="2"/>
</dbReference>
<dbReference type="HAMAP" id="MF_01558">
    <property type="entry name" value="Cyt_deam"/>
    <property type="match status" value="1"/>
</dbReference>
<dbReference type="InterPro" id="IPR016192">
    <property type="entry name" value="APOBEC/CMP_deaminase_Zn-bd"/>
</dbReference>
<dbReference type="InterPro" id="IPR002125">
    <property type="entry name" value="CMP_dCMP_dom"/>
</dbReference>
<dbReference type="InterPro" id="IPR013171">
    <property type="entry name" value="Cyd/dCyd_deaminase_Zn-bd"/>
</dbReference>
<dbReference type="InterPro" id="IPR050202">
    <property type="entry name" value="Cyt/Deoxycyt_deaminase"/>
</dbReference>
<dbReference type="InterPro" id="IPR006263">
    <property type="entry name" value="Cyt_deam_dimer"/>
</dbReference>
<dbReference type="InterPro" id="IPR016193">
    <property type="entry name" value="Cytidine_deaminase-like"/>
</dbReference>
<dbReference type="InterPro" id="IPR020797">
    <property type="entry name" value="Cytidine_deaminase_bacteria"/>
</dbReference>
<dbReference type="NCBIfam" id="TIGR01355">
    <property type="entry name" value="cyt_deam_dimer"/>
    <property type="match status" value="1"/>
</dbReference>
<dbReference type="NCBIfam" id="NF006537">
    <property type="entry name" value="PRK09027.1"/>
    <property type="match status" value="1"/>
</dbReference>
<dbReference type="PANTHER" id="PTHR11644">
    <property type="entry name" value="CYTIDINE DEAMINASE"/>
    <property type="match status" value="1"/>
</dbReference>
<dbReference type="PANTHER" id="PTHR11644:SF2">
    <property type="entry name" value="CYTIDINE DEAMINASE"/>
    <property type="match status" value="1"/>
</dbReference>
<dbReference type="Pfam" id="PF00383">
    <property type="entry name" value="dCMP_cyt_deam_1"/>
    <property type="match status" value="1"/>
</dbReference>
<dbReference type="Pfam" id="PF08211">
    <property type="entry name" value="dCMP_cyt_deam_2"/>
    <property type="match status" value="1"/>
</dbReference>
<dbReference type="PIRSF" id="PIRSF006334">
    <property type="entry name" value="Cdd_plus_pseudo"/>
    <property type="match status" value="1"/>
</dbReference>
<dbReference type="SUPFAM" id="SSF53927">
    <property type="entry name" value="Cytidine deaminase-like"/>
    <property type="match status" value="2"/>
</dbReference>
<dbReference type="PROSITE" id="PS00903">
    <property type="entry name" value="CYT_DCMP_DEAMINASES_1"/>
    <property type="match status" value="1"/>
</dbReference>
<dbReference type="PROSITE" id="PS51747">
    <property type="entry name" value="CYT_DCMP_DEAMINASES_2"/>
    <property type="match status" value="2"/>
</dbReference>
<sequence length="295" mass="31912">MKSRIEQALASAPEALSKQLAPIVLADDFDATLSAQQFEQLLSATSLSDKELRVALLPFAAAYSYAPISEFYVGAIVRGLSGRLYFGANMEFFGVQLGQTVHAEQSAISHAWMKGEHGVKDITINFSPCGHCRQFMNELSTAKELKVQLPERDEKSLHEYLPEAFGPADLGIESGLMAEVKHQFVCDDKDALIQQAVEAMNMSHAPYTNNLSGLALELANGRVFKGAYAENAAFNPSLPPLQVALIQVLLAGETFDSIKAAALVENSEGKISHLADTQSTLEALNPDIPVSFVNV</sequence>